<organism>
    <name type="scientific">Periplaneta brunnea</name>
    <name type="common">Brown cockroach</name>
    <dbReference type="NCBI Taxonomy" id="36976"/>
    <lineage>
        <taxon>Eukaryota</taxon>
        <taxon>Metazoa</taxon>
        <taxon>Ecdysozoa</taxon>
        <taxon>Arthropoda</taxon>
        <taxon>Hexapoda</taxon>
        <taxon>Insecta</taxon>
        <taxon>Pterygota</taxon>
        <taxon>Neoptera</taxon>
        <taxon>Polyneoptera</taxon>
        <taxon>Dictyoptera</taxon>
        <taxon>Blattodea</taxon>
        <taxon>Blattoidea</taxon>
        <taxon>Blattidae</taxon>
        <taxon>Blattinae</taxon>
        <taxon>Periplaneta</taxon>
    </lineage>
</organism>
<keyword id="KW-0027">Amidation</keyword>
<keyword id="KW-0903">Direct protein sequencing</keyword>
<keyword id="KW-0527">Neuropeptide</keyword>
<keyword id="KW-0964">Secreted</keyword>
<evidence type="ECO:0000255" key="1"/>
<evidence type="ECO:0000269" key="2">
    <source>
    </source>
</evidence>
<evidence type="ECO:0000303" key="3">
    <source>
    </source>
</evidence>
<evidence type="ECO:0000305" key="4"/>
<feature type="peptide" id="PRO_0000378758" description="Periviscerokinin-1" evidence="2">
    <location>
        <begin position="1"/>
        <end position="11"/>
    </location>
</feature>
<feature type="modified residue" description="Asparagine amide" evidence="2">
    <location>
        <position position="11"/>
    </location>
</feature>
<comment type="function">
    <text evidence="4">Mediates visceral muscle contractile activity (myotropic activity).</text>
</comment>
<comment type="subcellular location">
    <subcellularLocation>
        <location evidence="4">Secreted</location>
    </subcellularLocation>
</comment>
<comment type="similarity">
    <text evidence="1">Belongs to the periviscerokinin family.</text>
</comment>
<proteinExistence type="evidence at protein level"/>
<accession>P85709</accession>
<reference evidence="4" key="1">
    <citation type="journal article" date="2009" name="BMC Evol. Biol.">
        <title>A proteomic approach for studying insect phylogeny: CAPA peptides of ancient insect taxa (Dictyoptera, Blattoptera) as a test case.</title>
        <authorList>
            <person name="Roth S."/>
            <person name="Fromm B."/>
            <person name="Gaede G."/>
            <person name="Predel R."/>
        </authorList>
    </citation>
    <scope>PROTEIN SEQUENCE</scope>
    <scope>AMIDATION AT ASN-11</scope>
    <source>
        <tissue evidence="2">Abdominal perisympathetic organs</tissue>
    </source>
</reference>
<protein>
    <recommendedName>
        <fullName evidence="3">Periviscerokinin-1</fullName>
        <shortName evidence="3">PerBr-PVK-1</shortName>
    </recommendedName>
</protein>
<sequence>GASGLIPVMRN</sequence>
<name>PVK1_PERBR</name>
<dbReference type="GO" id="GO:0005576">
    <property type="term" value="C:extracellular region"/>
    <property type="evidence" value="ECO:0007669"/>
    <property type="project" value="UniProtKB-SubCell"/>
</dbReference>
<dbReference type="GO" id="GO:0007218">
    <property type="term" value="P:neuropeptide signaling pathway"/>
    <property type="evidence" value="ECO:0007669"/>
    <property type="project" value="UniProtKB-KW"/>
</dbReference>